<dbReference type="EC" id="3.1.-.-" evidence="1"/>
<dbReference type="EMBL" id="BC160482">
    <property type="protein sequence ID" value="AAI60482.1"/>
    <property type="molecule type" value="mRNA"/>
</dbReference>
<dbReference type="SMR" id="B1H158"/>
<dbReference type="FunCoup" id="B1H158">
    <property type="interactions" value="2692"/>
</dbReference>
<dbReference type="STRING" id="8364.ENSXETP00000012997"/>
<dbReference type="PaxDb" id="8364-ENSXETP00000014663"/>
<dbReference type="eggNOG" id="KOG2519">
    <property type="taxonomic scope" value="Eukaryota"/>
</dbReference>
<dbReference type="InParanoid" id="B1H158"/>
<dbReference type="Proteomes" id="UP000008143">
    <property type="component" value="Unplaced"/>
</dbReference>
<dbReference type="GO" id="GO:0005739">
    <property type="term" value="C:mitochondrion"/>
    <property type="evidence" value="ECO:0007669"/>
    <property type="project" value="UniProtKB-SubCell"/>
</dbReference>
<dbReference type="GO" id="GO:0005730">
    <property type="term" value="C:nucleolus"/>
    <property type="evidence" value="ECO:0007669"/>
    <property type="project" value="UniProtKB-SubCell"/>
</dbReference>
<dbReference type="GO" id="GO:0005654">
    <property type="term" value="C:nucleoplasm"/>
    <property type="evidence" value="ECO:0007669"/>
    <property type="project" value="UniProtKB-SubCell"/>
</dbReference>
<dbReference type="GO" id="GO:0008409">
    <property type="term" value="F:5'-3' exonuclease activity"/>
    <property type="evidence" value="ECO:0007669"/>
    <property type="project" value="UniProtKB-UniRule"/>
</dbReference>
<dbReference type="GO" id="GO:0017108">
    <property type="term" value="F:5'-flap endonuclease activity"/>
    <property type="evidence" value="ECO:0007669"/>
    <property type="project" value="UniProtKB-UniRule"/>
</dbReference>
<dbReference type="GO" id="GO:0003677">
    <property type="term" value="F:DNA binding"/>
    <property type="evidence" value="ECO:0007669"/>
    <property type="project" value="UniProtKB-UniRule"/>
</dbReference>
<dbReference type="GO" id="GO:0000287">
    <property type="term" value="F:magnesium ion binding"/>
    <property type="evidence" value="ECO:0007669"/>
    <property type="project" value="UniProtKB-UniRule"/>
</dbReference>
<dbReference type="GO" id="GO:0006284">
    <property type="term" value="P:base-excision repair"/>
    <property type="evidence" value="ECO:0007669"/>
    <property type="project" value="UniProtKB-UniRule"/>
</dbReference>
<dbReference type="GO" id="GO:0043137">
    <property type="term" value="P:DNA replication, removal of RNA primer"/>
    <property type="evidence" value="ECO:0007669"/>
    <property type="project" value="UniProtKB-UniRule"/>
</dbReference>
<dbReference type="CDD" id="cd09907">
    <property type="entry name" value="H3TH_FEN1-Euk"/>
    <property type="match status" value="1"/>
</dbReference>
<dbReference type="CDD" id="cd09867">
    <property type="entry name" value="PIN_FEN1"/>
    <property type="match status" value="1"/>
</dbReference>
<dbReference type="FunFam" id="1.10.150.20:FF:000009">
    <property type="entry name" value="Flap endonuclease 1"/>
    <property type="match status" value="1"/>
</dbReference>
<dbReference type="FunFam" id="3.40.50.1010:FF:000003">
    <property type="entry name" value="Flap endonuclease 1"/>
    <property type="match status" value="1"/>
</dbReference>
<dbReference type="Gene3D" id="1.10.150.20">
    <property type="entry name" value="5' to 3' exonuclease, C-terminal subdomain"/>
    <property type="match status" value="1"/>
</dbReference>
<dbReference type="Gene3D" id="3.40.50.1010">
    <property type="entry name" value="5'-nuclease"/>
    <property type="match status" value="1"/>
</dbReference>
<dbReference type="HAMAP" id="MF_00614">
    <property type="entry name" value="Fen"/>
    <property type="match status" value="1"/>
</dbReference>
<dbReference type="InterPro" id="IPR002421">
    <property type="entry name" value="5-3_exonuclease"/>
</dbReference>
<dbReference type="InterPro" id="IPR036279">
    <property type="entry name" value="5-3_exonuclease_C_sf"/>
</dbReference>
<dbReference type="InterPro" id="IPR023426">
    <property type="entry name" value="Flap_endonuc"/>
</dbReference>
<dbReference type="InterPro" id="IPR008918">
    <property type="entry name" value="HhH2"/>
</dbReference>
<dbReference type="InterPro" id="IPR029060">
    <property type="entry name" value="PIN-like_dom_sf"/>
</dbReference>
<dbReference type="InterPro" id="IPR006086">
    <property type="entry name" value="XPG-I_dom"/>
</dbReference>
<dbReference type="InterPro" id="IPR006084">
    <property type="entry name" value="XPG/Rad2"/>
</dbReference>
<dbReference type="InterPro" id="IPR019974">
    <property type="entry name" value="XPG_CS"/>
</dbReference>
<dbReference type="InterPro" id="IPR006085">
    <property type="entry name" value="XPG_DNA_repair_N"/>
</dbReference>
<dbReference type="PANTHER" id="PTHR11081:SF73">
    <property type="entry name" value="FLAP ENDONUCLEASE 1"/>
    <property type="match status" value="1"/>
</dbReference>
<dbReference type="PANTHER" id="PTHR11081">
    <property type="entry name" value="FLAP ENDONUCLEASE FAMILY MEMBER"/>
    <property type="match status" value="1"/>
</dbReference>
<dbReference type="Pfam" id="PF00867">
    <property type="entry name" value="XPG_I"/>
    <property type="match status" value="1"/>
</dbReference>
<dbReference type="Pfam" id="PF00752">
    <property type="entry name" value="XPG_N"/>
    <property type="match status" value="1"/>
</dbReference>
<dbReference type="PRINTS" id="PR00853">
    <property type="entry name" value="XPGRADSUPER"/>
</dbReference>
<dbReference type="SMART" id="SM00475">
    <property type="entry name" value="53EXOc"/>
    <property type="match status" value="1"/>
</dbReference>
<dbReference type="SMART" id="SM00279">
    <property type="entry name" value="HhH2"/>
    <property type="match status" value="1"/>
</dbReference>
<dbReference type="SMART" id="SM00484">
    <property type="entry name" value="XPGI"/>
    <property type="match status" value="1"/>
</dbReference>
<dbReference type="SMART" id="SM00485">
    <property type="entry name" value="XPGN"/>
    <property type="match status" value="1"/>
</dbReference>
<dbReference type="SUPFAM" id="SSF47807">
    <property type="entry name" value="5' to 3' exonuclease, C-terminal subdomain"/>
    <property type="match status" value="1"/>
</dbReference>
<dbReference type="SUPFAM" id="SSF88723">
    <property type="entry name" value="PIN domain-like"/>
    <property type="match status" value="1"/>
</dbReference>
<dbReference type="PROSITE" id="PS00841">
    <property type="entry name" value="XPG_1"/>
    <property type="match status" value="1"/>
</dbReference>
<feature type="chain" id="PRO_0000403493" description="Flap endonuclease 1">
    <location>
        <begin position="1"/>
        <end position="382"/>
    </location>
</feature>
<feature type="region of interest" description="N-domain">
    <location>
        <begin position="1"/>
        <end position="104"/>
    </location>
</feature>
<feature type="region of interest" description="I-domain">
    <location>
        <begin position="122"/>
        <end position="253"/>
    </location>
</feature>
<feature type="region of interest" description="Interaction with PCNA" evidence="1">
    <location>
        <begin position="336"/>
        <end position="344"/>
    </location>
</feature>
<feature type="region of interest" description="Disordered" evidence="2">
    <location>
        <begin position="352"/>
        <end position="382"/>
    </location>
</feature>
<feature type="binding site" evidence="1">
    <location>
        <position position="34"/>
    </location>
    <ligand>
        <name>Mg(2+)</name>
        <dbReference type="ChEBI" id="CHEBI:18420"/>
        <label>1</label>
    </ligand>
</feature>
<feature type="binding site" evidence="1">
    <location>
        <position position="47"/>
    </location>
    <ligand>
        <name>DNA</name>
        <dbReference type="ChEBI" id="CHEBI:16991"/>
    </ligand>
</feature>
<feature type="binding site" evidence="1">
    <location>
        <position position="70"/>
    </location>
    <ligand>
        <name>DNA</name>
        <dbReference type="ChEBI" id="CHEBI:16991"/>
    </ligand>
</feature>
<feature type="binding site" evidence="1">
    <location>
        <position position="86"/>
    </location>
    <ligand>
        <name>Mg(2+)</name>
        <dbReference type="ChEBI" id="CHEBI:18420"/>
        <label>1</label>
    </ligand>
</feature>
<feature type="binding site" evidence="1">
    <location>
        <position position="158"/>
    </location>
    <ligand>
        <name>DNA</name>
        <dbReference type="ChEBI" id="CHEBI:16991"/>
    </ligand>
</feature>
<feature type="binding site" evidence="1">
    <location>
        <position position="158"/>
    </location>
    <ligand>
        <name>Mg(2+)</name>
        <dbReference type="ChEBI" id="CHEBI:18420"/>
        <label>1</label>
    </ligand>
</feature>
<feature type="binding site" evidence="1">
    <location>
        <position position="160"/>
    </location>
    <ligand>
        <name>Mg(2+)</name>
        <dbReference type="ChEBI" id="CHEBI:18420"/>
        <label>1</label>
    </ligand>
</feature>
<feature type="binding site" evidence="1">
    <location>
        <position position="179"/>
    </location>
    <ligand>
        <name>Mg(2+)</name>
        <dbReference type="ChEBI" id="CHEBI:18420"/>
        <label>2</label>
    </ligand>
</feature>
<feature type="binding site" evidence="1">
    <location>
        <position position="181"/>
    </location>
    <ligand>
        <name>Mg(2+)</name>
        <dbReference type="ChEBI" id="CHEBI:18420"/>
        <label>2</label>
    </ligand>
</feature>
<feature type="binding site" evidence="1">
    <location>
        <position position="231"/>
    </location>
    <ligand>
        <name>DNA</name>
        <dbReference type="ChEBI" id="CHEBI:16991"/>
    </ligand>
</feature>
<feature type="binding site" evidence="1">
    <location>
        <position position="233"/>
    </location>
    <ligand>
        <name>DNA</name>
        <dbReference type="ChEBI" id="CHEBI:16991"/>
    </ligand>
</feature>
<feature type="binding site" evidence="1">
    <location>
        <position position="233"/>
    </location>
    <ligand>
        <name>Mg(2+)</name>
        <dbReference type="ChEBI" id="CHEBI:18420"/>
        <label>2</label>
    </ligand>
</feature>
<name>FEN1_XENTR</name>
<reference key="1">
    <citation type="submission" date="2008-03" db="EMBL/GenBank/DDBJ databases">
        <authorList>
            <consortium name="NIH - Xenopus Gene Collection (XGC) project"/>
        </authorList>
    </citation>
    <scope>NUCLEOTIDE SEQUENCE [LARGE SCALE MRNA]</scope>
    <source>
        <tissue>Embryo</tissue>
    </source>
</reference>
<protein>
    <recommendedName>
        <fullName evidence="1">Flap endonuclease 1</fullName>
        <shortName evidence="1">FEN-1</shortName>
        <ecNumber evidence="1">3.1.-.-</ecNumber>
    </recommendedName>
    <alternativeName>
        <fullName evidence="1">Flap structure-specific endonuclease 1</fullName>
    </alternativeName>
</protein>
<sequence>MGIHGLAKLIADVAPAAIKEHDIKSYFGRKVAVDASMCIYQFLIAVRQDGNMLQNEDGETTSHLMGMFYRTIRMIEHGIKPVYVFDGKPPQMKSGELAKRSERRAEAEKLLEAAEEAGEVENIEKFNKRLVKVTKQHNEECKKLLTLMGVPYVDAPCEAEATCAALVKAGKVYAAATEDMDALTFGTPVLLRHLTASEAKKLPIQEFHLNRVMQDMGVSHEQFVDLCILLGSDYCETIRGIGPKRAIDLIRQHKSIEEIVDNIDLKKYPIPENWLHKEARQLFLEPEVVDTESTELKWIEPDEEGLVAFMCAEKQFSEDRIRNGAKKLAKNRQGSTQGRLDDFFKVTGSISSTKRKEVESKGSAKKKAKTAGTPAGKFKRGK</sequence>
<proteinExistence type="evidence at transcript level"/>
<evidence type="ECO:0000255" key="1">
    <source>
        <dbReference type="HAMAP-Rule" id="MF_03140"/>
    </source>
</evidence>
<evidence type="ECO:0000256" key="2">
    <source>
        <dbReference type="SAM" id="MobiDB-lite"/>
    </source>
</evidence>
<comment type="function">
    <text evidence="1">Structure-specific nuclease with 5'-flap endonuclease and 5'-3' exonuclease activities involved in DNA replication and repair. During DNA replication, cleaves the 5'-overhanging flap structure that is generated by displacement synthesis when DNA polymerase encounters the 5'-end of a downstream Okazaki fragment. It enters the flap from the 5'-end and then tracks to cleave the flap base, leaving a nick for ligation. Also involved in the long patch base excision repair (LP-BER) pathway, by cleaving within the apurinic/apyrimidinic (AP) site-terminated flap. Acts as a genome stabilization factor that prevents flaps from equilibrating into structures that lead to duplications and deletions. Also possesses 5'-3' exonuclease activity on nicked or gapped double-stranded DNA, and exhibits RNase H activity. Also involved in replication and repair of rDNA and in repairing mitochondrial DNA.</text>
</comment>
<comment type="cofactor">
    <cofactor evidence="1">
        <name>Mg(2+)</name>
        <dbReference type="ChEBI" id="CHEBI:18420"/>
    </cofactor>
    <text evidence="1">Binds 2 magnesium ions per subunit. They probably participate in the reaction catalyzed by the enzyme. May bind an additional third magnesium ion after substrate binding.</text>
</comment>
<comment type="subunit">
    <text evidence="1">Interacts with PCNA. Three molecules of fen1 bind to one PCNA trimer with each molecule binding to one PCNA monomer. PCNA stimulates the nuclease activity without altering cleavage specificity.</text>
</comment>
<comment type="subcellular location">
    <subcellularLocation>
        <location evidence="1">Nucleus</location>
        <location evidence="1">Nucleolus</location>
    </subcellularLocation>
    <subcellularLocation>
        <location evidence="1">Nucleus</location>
        <location evidence="1">Nucleoplasm</location>
    </subcellularLocation>
    <subcellularLocation>
        <location evidence="1">Mitochondrion</location>
    </subcellularLocation>
    <text evidence="1">Resides mostly in the nucleoli and relocalizes to the nucleoplasm upon DNA damage.</text>
</comment>
<comment type="PTM">
    <text evidence="1">Phosphorylated. Phosphorylation upon DNA damage induces relocalization to the nuclear plasma.</text>
</comment>
<comment type="similarity">
    <text evidence="1">Belongs to the XPG/RAD2 endonuclease family. FEN1 subfamily.</text>
</comment>
<keyword id="KW-0227">DNA damage</keyword>
<keyword id="KW-0234">DNA repair</keyword>
<keyword id="KW-0235">DNA replication</keyword>
<keyword id="KW-0255">Endonuclease</keyword>
<keyword id="KW-0269">Exonuclease</keyword>
<keyword id="KW-0378">Hydrolase</keyword>
<keyword id="KW-0460">Magnesium</keyword>
<keyword id="KW-0479">Metal-binding</keyword>
<keyword id="KW-0496">Mitochondrion</keyword>
<keyword id="KW-0540">Nuclease</keyword>
<keyword id="KW-0539">Nucleus</keyword>
<keyword id="KW-0597">Phosphoprotein</keyword>
<keyword id="KW-1185">Reference proteome</keyword>
<gene>
    <name type="primary">fen1</name>
</gene>
<organism>
    <name type="scientific">Xenopus tropicalis</name>
    <name type="common">Western clawed frog</name>
    <name type="synonym">Silurana tropicalis</name>
    <dbReference type="NCBI Taxonomy" id="8364"/>
    <lineage>
        <taxon>Eukaryota</taxon>
        <taxon>Metazoa</taxon>
        <taxon>Chordata</taxon>
        <taxon>Craniata</taxon>
        <taxon>Vertebrata</taxon>
        <taxon>Euteleostomi</taxon>
        <taxon>Amphibia</taxon>
        <taxon>Batrachia</taxon>
        <taxon>Anura</taxon>
        <taxon>Pipoidea</taxon>
        <taxon>Pipidae</taxon>
        <taxon>Xenopodinae</taxon>
        <taxon>Xenopus</taxon>
        <taxon>Silurana</taxon>
    </lineage>
</organism>
<accession>B1H158</accession>